<proteinExistence type="inferred from homology"/>
<name>AATD_SACI2</name>
<keyword id="KW-0066">ATP synthesis</keyword>
<keyword id="KW-1003">Cell membrane</keyword>
<keyword id="KW-0375">Hydrogen ion transport</keyword>
<keyword id="KW-0406">Ion transport</keyword>
<keyword id="KW-0472">Membrane</keyword>
<keyword id="KW-0813">Transport</keyword>
<reference key="1">
    <citation type="journal article" date="2009" name="Proc. Natl. Acad. Sci. U.S.A.">
        <title>Biogeography of the Sulfolobus islandicus pan-genome.</title>
        <authorList>
            <person name="Reno M.L."/>
            <person name="Held N.L."/>
            <person name="Fields C.J."/>
            <person name="Burke P.V."/>
            <person name="Whitaker R.J."/>
        </authorList>
    </citation>
    <scope>NUCLEOTIDE SEQUENCE [LARGE SCALE GENOMIC DNA]</scope>
    <source>
        <strain>L.S.2.15 / Lassen #1</strain>
    </source>
</reference>
<gene>
    <name evidence="1" type="primary">atpD</name>
    <name type="ordered locus">LS215_1672</name>
</gene>
<dbReference type="EMBL" id="CP001399">
    <property type="protein sequence ID" value="ACP35676.1"/>
    <property type="molecule type" value="Genomic_DNA"/>
</dbReference>
<dbReference type="RefSeq" id="WP_012711557.1">
    <property type="nucleotide sequence ID" value="NC_012589.1"/>
</dbReference>
<dbReference type="SMR" id="C3MQL3"/>
<dbReference type="KEGG" id="sis:LS215_1672"/>
<dbReference type="HOGENOM" id="CLU_069688_2_2_2"/>
<dbReference type="OrthoDB" id="117390at2157"/>
<dbReference type="Proteomes" id="UP000001747">
    <property type="component" value="Chromosome"/>
</dbReference>
<dbReference type="GO" id="GO:0005886">
    <property type="term" value="C:plasma membrane"/>
    <property type="evidence" value="ECO:0007669"/>
    <property type="project" value="UniProtKB-SubCell"/>
</dbReference>
<dbReference type="GO" id="GO:0005524">
    <property type="term" value="F:ATP binding"/>
    <property type="evidence" value="ECO:0007669"/>
    <property type="project" value="UniProtKB-UniRule"/>
</dbReference>
<dbReference type="GO" id="GO:0046933">
    <property type="term" value="F:proton-transporting ATP synthase activity, rotational mechanism"/>
    <property type="evidence" value="ECO:0007669"/>
    <property type="project" value="UniProtKB-UniRule"/>
</dbReference>
<dbReference type="GO" id="GO:0046961">
    <property type="term" value="F:proton-transporting ATPase activity, rotational mechanism"/>
    <property type="evidence" value="ECO:0007669"/>
    <property type="project" value="InterPro"/>
</dbReference>
<dbReference type="GO" id="GO:0042777">
    <property type="term" value="P:proton motive force-driven plasma membrane ATP synthesis"/>
    <property type="evidence" value="ECO:0007669"/>
    <property type="project" value="UniProtKB-UniRule"/>
</dbReference>
<dbReference type="FunFam" id="1.10.287.3240:FF:000012">
    <property type="entry name" value="V-type ATP synthase subunit D"/>
    <property type="match status" value="1"/>
</dbReference>
<dbReference type="Gene3D" id="1.10.287.3240">
    <property type="match status" value="1"/>
</dbReference>
<dbReference type="HAMAP" id="MF_00271">
    <property type="entry name" value="ATP_synth_D_arch"/>
    <property type="match status" value="1"/>
</dbReference>
<dbReference type="InterPro" id="IPR002699">
    <property type="entry name" value="V_ATPase_D"/>
</dbReference>
<dbReference type="NCBIfam" id="NF001544">
    <property type="entry name" value="PRK00373.1-3"/>
    <property type="match status" value="1"/>
</dbReference>
<dbReference type="NCBIfam" id="TIGR00309">
    <property type="entry name" value="V_ATPase_subD"/>
    <property type="match status" value="1"/>
</dbReference>
<dbReference type="PANTHER" id="PTHR11671">
    <property type="entry name" value="V-TYPE ATP SYNTHASE SUBUNIT D"/>
    <property type="match status" value="1"/>
</dbReference>
<dbReference type="Pfam" id="PF01813">
    <property type="entry name" value="ATP-synt_D"/>
    <property type="match status" value="1"/>
</dbReference>
<organism>
    <name type="scientific">Saccharolobus islandicus (strain L.S.2.15 / Lassen #1)</name>
    <name type="common">Sulfolobus islandicus</name>
    <dbReference type="NCBI Taxonomy" id="429572"/>
    <lineage>
        <taxon>Archaea</taxon>
        <taxon>Thermoproteota</taxon>
        <taxon>Thermoprotei</taxon>
        <taxon>Sulfolobales</taxon>
        <taxon>Sulfolobaceae</taxon>
        <taxon>Saccharolobus</taxon>
    </lineage>
</organism>
<comment type="function">
    <text evidence="1">Component of the A-type ATP synthase that produces ATP from ADP in the presence of a proton gradient across the membrane.</text>
</comment>
<comment type="subunit">
    <text evidence="1">Has multiple subunits with at least A(3), B(3), C, D, E, F, H, I and proteolipid K(x).</text>
</comment>
<comment type="subcellular location">
    <subcellularLocation>
        <location evidence="1">Cell membrane</location>
        <topology evidence="1">Peripheral membrane protein</topology>
    </subcellularLocation>
</comment>
<comment type="similarity">
    <text evidence="1">Belongs to the V-ATPase D subunit family.</text>
</comment>
<feature type="chain" id="PRO_1000209793" description="A-type ATP synthase subunit D">
    <location>
        <begin position="1"/>
        <end position="213"/>
    </location>
</feature>
<sequence length="213" mass="24963">MSQKVLPTKINLIQFRRQLRLITVIKRLLENKREVLLLYLRTYASEYEKIYNEVNEEMKKVYESYLQAVASEGISNIEEIALSQKPSLEVSSSIKVIFGVKVPTIKLDKSTIPPKPFSDVETSPYLSESYEEMTEALNKIIELVELESTIRSLVSELRKTQRLINSIDNYILPFYRGSIKFIKQILEDRQREEFSRLKIIRRILQRRRESGSG</sequence>
<protein>
    <recommendedName>
        <fullName evidence="1">A-type ATP synthase subunit D</fullName>
    </recommendedName>
</protein>
<accession>C3MQL3</accession>
<evidence type="ECO:0000255" key="1">
    <source>
        <dbReference type="HAMAP-Rule" id="MF_00271"/>
    </source>
</evidence>